<name>RL3_XYLFA</name>
<organism>
    <name type="scientific">Xylella fastidiosa (strain 9a5c)</name>
    <dbReference type="NCBI Taxonomy" id="160492"/>
    <lineage>
        <taxon>Bacteria</taxon>
        <taxon>Pseudomonadati</taxon>
        <taxon>Pseudomonadota</taxon>
        <taxon>Gammaproteobacteria</taxon>
        <taxon>Lysobacterales</taxon>
        <taxon>Lysobacteraceae</taxon>
        <taxon>Xylella</taxon>
    </lineage>
</organism>
<reference key="1">
    <citation type="journal article" date="2000" name="Nature">
        <title>The genome sequence of the plant pathogen Xylella fastidiosa.</title>
        <authorList>
            <person name="Simpson A.J.G."/>
            <person name="Reinach F.C."/>
            <person name="Arruda P."/>
            <person name="Abreu F.A."/>
            <person name="Acencio M."/>
            <person name="Alvarenga R."/>
            <person name="Alves L.M.C."/>
            <person name="Araya J.E."/>
            <person name="Baia G.S."/>
            <person name="Baptista C.S."/>
            <person name="Barros M.H."/>
            <person name="Bonaccorsi E.D."/>
            <person name="Bordin S."/>
            <person name="Bove J.M."/>
            <person name="Briones M.R.S."/>
            <person name="Bueno M.R.P."/>
            <person name="Camargo A.A."/>
            <person name="Camargo L.E.A."/>
            <person name="Carraro D.M."/>
            <person name="Carrer H."/>
            <person name="Colauto N.B."/>
            <person name="Colombo C."/>
            <person name="Costa F.F."/>
            <person name="Costa M.C.R."/>
            <person name="Costa-Neto C.M."/>
            <person name="Coutinho L.L."/>
            <person name="Cristofani M."/>
            <person name="Dias-Neto E."/>
            <person name="Docena C."/>
            <person name="El-Dorry H."/>
            <person name="Facincani A.P."/>
            <person name="Ferreira A.J.S."/>
            <person name="Ferreira V.C.A."/>
            <person name="Ferro J.A."/>
            <person name="Fraga J.S."/>
            <person name="Franca S.C."/>
            <person name="Franco M.C."/>
            <person name="Frohme M."/>
            <person name="Furlan L.R."/>
            <person name="Garnier M."/>
            <person name="Goldman G.H."/>
            <person name="Goldman M.H.S."/>
            <person name="Gomes S.L."/>
            <person name="Gruber A."/>
            <person name="Ho P.L."/>
            <person name="Hoheisel J.D."/>
            <person name="Junqueira M.L."/>
            <person name="Kemper E.L."/>
            <person name="Kitajima J.P."/>
            <person name="Krieger J.E."/>
            <person name="Kuramae E.E."/>
            <person name="Laigret F."/>
            <person name="Lambais M.R."/>
            <person name="Leite L.C.C."/>
            <person name="Lemos E.G.M."/>
            <person name="Lemos M.V.F."/>
            <person name="Lopes S.A."/>
            <person name="Lopes C.R."/>
            <person name="Machado J.A."/>
            <person name="Machado M.A."/>
            <person name="Madeira A.M.B.N."/>
            <person name="Madeira H.M.F."/>
            <person name="Marino C.L."/>
            <person name="Marques M.V."/>
            <person name="Martins E.A.L."/>
            <person name="Martins E.M.F."/>
            <person name="Matsukuma A.Y."/>
            <person name="Menck C.F.M."/>
            <person name="Miracca E.C."/>
            <person name="Miyaki C.Y."/>
            <person name="Monteiro-Vitorello C.B."/>
            <person name="Moon D.H."/>
            <person name="Nagai M.A."/>
            <person name="Nascimento A.L.T.O."/>
            <person name="Netto L.E.S."/>
            <person name="Nhani A. Jr."/>
            <person name="Nobrega F.G."/>
            <person name="Nunes L.R."/>
            <person name="Oliveira M.A."/>
            <person name="de Oliveira M.C."/>
            <person name="de Oliveira R.C."/>
            <person name="Palmieri D.A."/>
            <person name="Paris A."/>
            <person name="Peixoto B.R."/>
            <person name="Pereira G.A.G."/>
            <person name="Pereira H.A. Jr."/>
            <person name="Pesquero J.B."/>
            <person name="Quaggio R.B."/>
            <person name="Roberto P.G."/>
            <person name="Rodrigues V."/>
            <person name="de Rosa A.J.M."/>
            <person name="de Rosa V.E. Jr."/>
            <person name="de Sa R.G."/>
            <person name="Santelli R.V."/>
            <person name="Sawasaki H.E."/>
            <person name="da Silva A.C.R."/>
            <person name="da Silva A.M."/>
            <person name="da Silva F.R."/>
            <person name="Silva W.A. Jr."/>
            <person name="da Silveira J.F."/>
            <person name="Silvestri M.L.Z."/>
            <person name="Siqueira W.J."/>
            <person name="de Souza A.A."/>
            <person name="de Souza A.P."/>
            <person name="Terenzi M.F."/>
            <person name="Truffi D."/>
            <person name="Tsai S.M."/>
            <person name="Tsuhako M.H."/>
            <person name="Vallada H."/>
            <person name="Van Sluys M.A."/>
            <person name="Verjovski-Almeida S."/>
            <person name="Vettore A.L."/>
            <person name="Zago M.A."/>
            <person name="Zatz M."/>
            <person name="Meidanis J."/>
            <person name="Setubal J.C."/>
        </authorList>
    </citation>
    <scope>NUCLEOTIDE SEQUENCE [LARGE SCALE GENOMIC DNA]</scope>
    <source>
        <strain>9a5c</strain>
    </source>
</reference>
<gene>
    <name evidence="1" type="primary">rplC</name>
    <name type="ordered locus">XF_1152</name>
</gene>
<proteinExistence type="inferred from homology"/>
<feature type="chain" id="PRO_0000077194" description="Large ribosomal subunit protein uL3">
    <location>
        <begin position="1"/>
        <end position="215"/>
    </location>
</feature>
<feature type="modified residue" description="N5-methylglutamine" evidence="1">
    <location>
        <position position="156"/>
    </location>
</feature>
<accession>Q9PE76</accession>
<keyword id="KW-0488">Methylation</keyword>
<keyword id="KW-0687">Ribonucleoprotein</keyword>
<keyword id="KW-0689">Ribosomal protein</keyword>
<keyword id="KW-0694">RNA-binding</keyword>
<keyword id="KW-0699">rRNA-binding</keyword>
<sequence length="215" mass="22887">MGCYSMGFVGRKAGMSRVFLEDGCSIPVTLIEATANRVVQIKTSDVDGYDAVQVTVGSRRSVLVNKPESGHFAKAKVEAGRGLWEFRVEKTQLGSYSVGSEVGLSIFAVGQKVDIQGITKGKGFQGTIKRHNFRMGDATHGNSLSHRAPGSLGQRQTPGRVFPGKKMSGHMGAVRQSVQNLEVVKIDVERCLIAVRGAIPGASGGDVLIRSASKI</sequence>
<protein>
    <recommendedName>
        <fullName evidence="1">Large ribosomal subunit protein uL3</fullName>
    </recommendedName>
    <alternativeName>
        <fullName evidence="2">50S ribosomal protein L3</fullName>
    </alternativeName>
</protein>
<dbReference type="EMBL" id="AE003849">
    <property type="protein sequence ID" value="AAF83962.1"/>
    <property type="status" value="ALT_INIT"/>
    <property type="molecule type" value="Genomic_DNA"/>
</dbReference>
<dbReference type="PIR" id="H82716">
    <property type="entry name" value="H82716"/>
</dbReference>
<dbReference type="RefSeq" id="WP_031336908.1">
    <property type="nucleotide sequence ID" value="NC_002488.3"/>
</dbReference>
<dbReference type="SMR" id="Q9PE76"/>
<dbReference type="STRING" id="160492.XF_1152"/>
<dbReference type="KEGG" id="xfa:XF_1152"/>
<dbReference type="eggNOG" id="COG0087">
    <property type="taxonomic scope" value="Bacteria"/>
</dbReference>
<dbReference type="HOGENOM" id="CLU_044142_4_1_6"/>
<dbReference type="Proteomes" id="UP000000812">
    <property type="component" value="Chromosome"/>
</dbReference>
<dbReference type="GO" id="GO:0022625">
    <property type="term" value="C:cytosolic large ribosomal subunit"/>
    <property type="evidence" value="ECO:0007669"/>
    <property type="project" value="TreeGrafter"/>
</dbReference>
<dbReference type="GO" id="GO:0019843">
    <property type="term" value="F:rRNA binding"/>
    <property type="evidence" value="ECO:0007669"/>
    <property type="project" value="UniProtKB-UniRule"/>
</dbReference>
<dbReference type="GO" id="GO:0003735">
    <property type="term" value="F:structural constituent of ribosome"/>
    <property type="evidence" value="ECO:0007669"/>
    <property type="project" value="InterPro"/>
</dbReference>
<dbReference type="GO" id="GO:0006412">
    <property type="term" value="P:translation"/>
    <property type="evidence" value="ECO:0007669"/>
    <property type="project" value="UniProtKB-UniRule"/>
</dbReference>
<dbReference type="FunFam" id="2.40.30.10:FF:000004">
    <property type="entry name" value="50S ribosomal protein L3"/>
    <property type="match status" value="1"/>
</dbReference>
<dbReference type="FunFam" id="3.30.160.810:FF:000001">
    <property type="entry name" value="50S ribosomal protein L3"/>
    <property type="match status" value="1"/>
</dbReference>
<dbReference type="Gene3D" id="3.30.160.810">
    <property type="match status" value="1"/>
</dbReference>
<dbReference type="Gene3D" id="2.40.30.10">
    <property type="entry name" value="Translation factors"/>
    <property type="match status" value="1"/>
</dbReference>
<dbReference type="HAMAP" id="MF_01325_B">
    <property type="entry name" value="Ribosomal_uL3_B"/>
    <property type="match status" value="1"/>
</dbReference>
<dbReference type="InterPro" id="IPR000597">
    <property type="entry name" value="Ribosomal_uL3"/>
</dbReference>
<dbReference type="InterPro" id="IPR019927">
    <property type="entry name" value="Ribosomal_uL3_bac/org-type"/>
</dbReference>
<dbReference type="InterPro" id="IPR019926">
    <property type="entry name" value="Ribosomal_uL3_CS"/>
</dbReference>
<dbReference type="InterPro" id="IPR009000">
    <property type="entry name" value="Transl_B-barrel_sf"/>
</dbReference>
<dbReference type="NCBIfam" id="TIGR03625">
    <property type="entry name" value="L3_bact"/>
    <property type="match status" value="1"/>
</dbReference>
<dbReference type="PANTHER" id="PTHR11229">
    <property type="entry name" value="50S RIBOSOMAL PROTEIN L3"/>
    <property type="match status" value="1"/>
</dbReference>
<dbReference type="PANTHER" id="PTHR11229:SF16">
    <property type="entry name" value="LARGE RIBOSOMAL SUBUNIT PROTEIN UL3C"/>
    <property type="match status" value="1"/>
</dbReference>
<dbReference type="Pfam" id="PF00297">
    <property type="entry name" value="Ribosomal_L3"/>
    <property type="match status" value="1"/>
</dbReference>
<dbReference type="SUPFAM" id="SSF50447">
    <property type="entry name" value="Translation proteins"/>
    <property type="match status" value="1"/>
</dbReference>
<dbReference type="PROSITE" id="PS00474">
    <property type="entry name" value="RIBOSOMAL_L3"/>
    <property type="match status" value="1"/>
</dbReference>
<comment type="function">
    <text evidence="1">One of the primary rRNA binding proteins, it binds directly near the 3'-end of the 23S rRNA, where it nucleates assembly of the 50S subunit.</text>
</comment>
<comment type="subunit">
    <text evidence="1">Part of the 50S ribosomal subunit. Forms a cluster with proteins L14 and L19.</text>
</comment>
<comment type="PTM">
    <text evidence="1">Methylated by PrmB.</text>
</comment>
<comment type="similarity">
    <text evidence="1">Belongs to the universal ribosomal protein uL3 family.</text>
</comment>
<comment type="sequence caution" evidence="2">
    <conflict type="erroneous initiation">
        <sequence resource="EMBL-CDS" id="AAF83962"/>
    </conflict>
</comment>
<evidence type="ECO:0000255" key="1">
    <source>
        <dbReference type="HAMAP-Rule" id="MF_01325"/>
    </source>
</evidence>
<evidence type="ECO:0000305" key="2"/>